<sequence length="75" mass="8986">MARYFRRRKFCRFTAEGVQEIDYKDIATLKNYITESGKIVPSRITGTRAKYQRQLARAIKRARYLSLLPYTDRHQ</sequence>
<accession>B7NGD6</accession>
<feature type="chain" id="PRO_1000119279" description="Small ribosomal subunit protein bS18">
    <location>
        <begin position="1"/>
        <end position="75"/>
    </location>
</feature>
<organism>
    <name type="scientific">Escherichia coli O17:K52:H18 (strain UMN026 / ExPEC)</name>
    <dbReference type="NCBI Taxonomy" id="585056"/>
    <lineage>
        <taxon>Bacteria</taxon>
        <taxon>Pseudomonadati</taxon>
        <taxon>Pseudomonadota</taxon>
        <taxon>Gammaproteobacteria</taxon>
        <taxon>Enterobacterales</taxon>
        <taxon>Enterobacteriaceae</taxon>
        <taxon>Escherichia</taxon>
    </lineage>
</organism>
<protein>
    <recommendedName>
        <fullName evidence="1">Small ribosomal subunit protein bS18</fullName>
    </recommendedName>
    <alternativeName>
        <fullName evidence="2">30S ribosomal protein S18</fullName>
    </alternativeName>
</protein>
<evidence type="ECO:0000255" key="1">
    <source>
        <dbReference type="HAMAP-Rule" id="MF_00270"/>
    </source>
</evidence>
<evidence type="ECO:0000305" key="2"/>
<comment type="function">
    <text evidence="1">Binds as a heterodimer with protein bS6 to the central domain of the 16S rRNA, where it helps stabilize the platform of the 30S subunit.</text>
</comment>
<comment type="subunit">
    <text evidence="1">Part of the 30S ribosomal subunit. Forms a tight heterodimer with protein bS6.</text>
</comment>
<comment type="similarity">
    <text evidence="1">Belongs to the bacterial ribosomal protein bS18 family.</text>
</comment>
<gene>
    <name evidence="1" type="primary">rpsR</name>
    <name type="ordered locus">ECUMN_4735</name>
</gene>
<name>RS18_ECOLU</name>
<reference key="1">
    <citation type="journal article" date="2009" name="PLoS Genet.">
        <title>Organised genome dynamics in the Escherichia coli species results in highly diverse adaptive paths.</title>
        <authorList>
            <person name="Touchon M."/>
            <person name="Hoede C."/>
            <person name="Tenaillon O."/>
            <person name="Barbe V."/>
            <person name="Baeriswyl S."/>
            <person name="Bidet P."/>
            <person name="Bingen E."/>
            <person name="Bonacorsi S."/>
            <person name="Bouchier C."/>
            <person name="Bouvet O."/>
            <person name="Calteau A."/>
            <person name="Chiapello H."/>
            <person name="Clermont O."/>
            <person name="Cruveiller S."/>
            <person name="Danchin A."/>
            <person name="Diard M."/>
            <person name="Dossat C."/>
            <person name="Karoui M.E."/>
            <person name="Frapy E."/>
            <person name="Garry L."/>
            <person name="Ghigo J.M."/>
            <person name="Gilles A.M."/>
            <person name="Johnson J."/>
            <person name="Le Bouguenec C."/>
            <person name="Lescat M."/>
            <person name="Mangenot S."/>
            <person name="Martinez-Jehanne V."/>
            <person name="Matic I."/>
            <person name="Nassif X."/>
            <person name="Oztas S."/>
            <person name="Petit M.A."/>
            <person name="Pichon C."/>
            <person name="Rouy Z."/>
            <person name="Ruf C.S."/>
            <person name="Schneider D."/>
            <person name="Tourret J."/>
            <person name="Vacherie B."/>
            <person name="Vallenet D."/>
            <person name="Medigue C."/>
            <person name="Rocha E.P.C."/>
            <person name="Denamur E."/>
        </authorList>
    </citation>
    <scope>NUCLEOTIDE SEQUENCE [LARGE SCALE GENOMIC DNA]</scope>
    <source>
        <strain>UMN026 / ExPEC</strain>
    </source>
</reference>
<keyword id="KW-0687">Ribonucleoprotein</keyword>
<keyword id="KW-0689">Ribosomal protein</keyword>
<keyword id="KW-0694">RNA-binding</keyword>
<keyword id="KW-0699">rRNA-binding</keyword>
<dbReference type="EMBL" id="CU928163">
    <property type="protein sequence ID" value="CAR15848.1"/>
    <property type="molecule type" value="Genomic_DNA"/>
</dbReference>
<dbReference type="RefSeq" id="WP_000135199.1">
    <property type="nucleotide sequence ID" value="NC_011751.1"/>
</dbReference>
<dbReference type="RefSeq" id="YP_002415332.1">
    <property type="nucleotide sequence ID" value="NC_011751.1"/>
</dbReference>
<dbReference type="SMR" id="B7NGD6"/>
<dbReference type="STRING" id="585056.ECUMN_4735"/>
<dbReference type="GeneID" id="98186237"/>
<dbReference type="KEGG" id="eum:ECUMN_4735"/>
<dbReference type="PATRIC" id="fig|585056.7.peg.4898"/>
<dbReference type="HOGENOM" id="CLU_148710_2_3_6"/>
<dbReference type="PRO" id="PR:B7NGD6"/>
<dbReference type="Proteomes" id="UP000007097">
    <property type="component" value="Chromosome"/>
</dbReference>
<dbReference type="GO" id="GO:0022627">
    <property type="term" value="C:cytosolic small ribosomal subunit"/>
    <property type="evidence" value="ECO:0007669"/>
    <property type="project" value="TreeGrafter"/>
</dbReference>
<dbReference type="GO" id="GO:0070181">
    <property type="term" value="F:small ribosomal subunit rRNA binding"/>
    <property type="evidence" value="ECO:0007669"/>
    <property type="project" value="TreeGrafter"/>
</dbReference>
<dbReference type="GO" id="GO:0003735">
    <property type="term" value="F:structural constituent of ribosome"/>
    <property type="evidence" value="ECO:0007669"/>
    <property type="project" value="InterPro"/>
</dbReference>
<dbReference type="GO" id="GO:0006412">
    <property type="term" value="P:translation"/>
    <property type="evidence" value="ECO:0007669"/>
    <property type="project" value="UniProtKB-UniRule"/>
</dbReference>
<dbReference type="FunFam" id="4.10.640.10:FF:000001">
    <property type="entry name" value="30S ribosomal protein S18"/>
    <property type="match status" value="1"/>
</dbReference>
<dbReference type="Gene3D" id="4.10.640.10">
    <property type="entry name" value="Ribosomal protein S18"/>
    <property type="match status" value="1"/>
</dbReference>
<dbReference type="HAMAP" id="MF_00270">
    <property type="entry name" value="Ribosomal_bS18"/>
    <property type="match status" value="1"/>
</dbReference>
<dbReference type="InterPro" id="IPR001648">
    <property type="entry name" value="Ribosomal_bS18"/>
</dbReference>
<dbReference type="InterPro" id="IPR018275">
    <property type="entry name" value="Ribosomal_bS18_CS"/>
</dbReference>
<dbReference type="InterPro" id="IPR036870">
    <property type="entry name" value="Ribosomal_bS18_sf"/>
</dbReference>
<dbReference type="NCBIfam" id="TIGR00165">
    <property type="entry name" value="S18"/>
    <property type="match status" value="1"/>
</dbReference>
<dbReference type="PANTHER" id="PTHR13479">
    <property type="entry name" value="30S RIBOSOMAL PROTEIN S18"/>
    <property type="match status" value="1"/>
</dbReference>
<dbReference type="PANTHER" id="PTHR13479:SF40">
    <property type="entry name" value="SMALL RIBOSOMAL SUBUNIT PROTEIN BS18M"/>
    <property type="match status" value="1"/>
</dbReference>
<dbReference type="Pfam" id="PF01084">
    <property type="entry name" value="Ribosomal_S18"/>
    <property type="match status" value="1"/>
</dbReference>
<dbReference type="PRINTS" id="PR00974">
    <property type="entry name" value="RIBOSOMALS18"/>
</dbReference>
<dbReference type="SUPFAM" id="SSF46911">
    <property type="entry name" value="Ribosomal protein S18"/>
    <property type="match status" value="1"/>
</dbReference>
<dbReference type="PROSITE" id="PS00057">
    <property type="entry name" value="RIBOSOMAL_S18"/>
    <property type="match status" value="1"/>
</dbReference>
<proteinExistence type="inferred from homology"/>